<reference key="1">
    <citation type="journal article" date="1995" name="Proc. Natl. Acad. Sci. U.S.A.">
        <title>A bovine cDNA and a yeast gene (VMA8) encoding the subunit D of the vacuolar H(+)-ATPase.</title>
        <authorList>
            <person name="Nelson H."/>
            <person name="Mandiyan S."/>
            <person name="Nelson N."/>
        </authorList>
    </citation>
    <scope>NUCLEOTIDE SEQUENCE [MRNA]</scope>
    <scope>PROTEIN SEQUENCE OF 111-137</scope>
    <scope>TISSUE SPECIFICITY</scope>
    <source>
        <tissue>Adrenal medulla</tissue>
    </source>
</reference>
<reference evidence="5 6" key="2">
    <citation type="journal article" date="2020" name="Nat. Commun.">
        <title>Cryo-EM structures of intact V-ATPase from bovine brain.</title>
        <authorList>
            <person name="Wang R."/>
            <person name="Long T."/>
            <person name="Hassan A."/>
            <person name="Wang J."/>
            <person name="Sun Y."/>
            <person name="Xie X.S."/>
            <person name="Li X."/>
        </authorList>
    </citation>
    <scope>STRUCTURE BY ELECTRON MICROSCOPY (3.37 ANGSTROMS)</scope>
    <scope>FUNCTION</scope>
    <scope>IDENTIFICATION IN THE V-ATPASE COMPLEX</scope>
    <scope>SUBCELLULAR LOCATION</scope>
    <scope>IDENTIFICATION BY MASS SPECTROMETRY</scope>
    <scope>TISSUE SPECIFICITY</scope>
</reference>
<accession>P39942</accession>
<dbReference type="EMBL" id="U11927">
    <property type="protein sequence ID" value="AAC48458.1"/>
    <property type="molecule type" value="mRNA"/>
</dbReference>
<dbReference type="PIR" id="A55910">
    <property type="entry name" value="A55910"/>
</dbReference>
<dbReference type="PDB" id="6XBW">
    <property type="method" value="EM"/>
    <property type="resolution" value="3.37 A"/>
    <property type="chains" value="H=1-247"/>
</dbReference>
<dbReference type="PDB" id="6XBY">
    <property type="method" value="EM"/>
    <property type="resolution" value="3.79 A"/>
    <property type="chains" value="H=1-247"/>
</dbReference>
<dbReference type="PDB" id="7KHR">
    <property type="method" value="EM"/>
    <property type="resolution" value="3.62 A"/>
    <property type="chains" value="H=1-247"/>
</dbReference>
<dbReference type="PDBsum" id="6XBW"/>
<dbReference type="PDBsum" id="6XBY"/>
<dbReference type="PDBsum" id="7KHR"/>
<dbReference type="SMR" id="P39942"/>
<dbReference type="CORUM" id="P39942"/>
<dbReference type="FunCoup" id="P39942">
    <property type="interactions" value="2243"/>
</dbReference>
<dbReference type="STRING" id="9913.ENSBTAP00000068669"/>
<dbReference type="PaxDb" id="9913-ENSBTAP00000021699"/>
<dbReference type="eggNOG" id="KOG1647">
    <property type="taxonomic scope" value="Eukaryota"/>
</dbReference>
<dbReference type="InParanoid" id="P39942"/>
<dbReference type="Proteomes" id="UP000009136">
    <property type="component" value="Unplaced"/>
</dbReference>
<dbReference type="GO" id="GO:0005813">
    <property type="term" value="C:centrosome"/>
    <property type="evidence" value="ECO:0007669"/>
    <property type="project" value="UniProtKB-SubCell"/>
</dbReference>
<dbReference type="GO" id="GO:0005929">
    <property type="term" value="C:cilium"/>
    <property type="evidence" value="ECO:0007669"/>
    <property type="project" value="UniProtKB-SubCell"/>
</dbReference>
<dbReference type="GO" id="GO:0030665">
    <property type="term" value="C:clathrin-coated vesicle membrane"/>
    <property type="evidence" value="ECO:0007669"/>
    <property type="project" value="UniProtKB-SubCell"/>
</dbReference>
<dbReference type="GO" id="GO:0033176">
    <property type="term" value="C:proton-transporting V-type ATPase complex"/>
    <property type="evidence" value="ECO:0000318"/>
    <property type="project" value="GO_Central"/>
</dbReference>
<dbReference type="GO" id="GO:0000221">
    <property type="term" value="C:vacuolar proton-transporting V-type ATPase, V1 domain"/>
    <property type="evidence" value="ECO:0000314"/>
    <property type="project" value="UniProtKB"/>
</dbReference>
<dbReference type="GO" id="GO:0046961">
    <property type="term" value="F:proton-transporting ATPase activity, rotational mechanism"/>
    <property type="evidence" value="ECO:0007669"/>
    <property type="project" value="InterPro"/>
</dbReference>
<dbReference type="GO" id="GO:0060271">
    <property type="term" value="P:cilium assembly"/>
    <property type="evidence" value="ECO:0000250"/>
    <property type="project" value="UniProtKB"/>
</dbReference>
<dbReference type="GO" id="GO:0045851">
    <property type="term" value="P:pH reduction"/>
    <property type="evidence" value="ECO:0000305"/>
    <property type="project" value="UniProtKB"/>
</dbReference>
<dbReference type="GO" id="GO:0061512">
    <property type="term" value="P:protein localization to cilium"/>
    <property type="evidence" value="ECO:0000250"/>
    <property type="project" value="UniProtKB"/>
</dbReference>
<dbReference type="GO" id="GO:1902600">
    <property type="term" value="P:proton transmembrane transport"/>
    <property type="evidence" value="ECO:0000305"/>
    <property type="project" value="UniProtKB"/>
</dbReference>
<dbReference type="FunFam" id="1.10.287.3240:FF:000001">
    <property type="entry name" value="V-type proton ATPase subunit D"/>
    <property type="match status" value="1"/>
</dbReference>
<dbReference type="Gene3D" id="1.10.287.3240">
    <property type="match status" value="1"/>
</dbReference>
<dbReference type="InterPro" id="IPR002699">
    <property type="entry name" value="V_ATPase_D"/>
</dbReference>
<dbReference type="NCBIfam" id="TIGR00309">
    <property type="entry name" value="V_ATPase_subD"/>
    <property type="match status" value="1"/>
</dbReference>
<dbReference type="PANTHER" id="PTHR11671">
    <property type="entry name" value="V-TYPE ATP SYNTHASE SUBUNIT D"/>
    <property type="match status" value="1"/>
</dbReference>
<dbReference type="Pfam" id="PF01813">
    <property type="entry name" value="ATP-synt_D"/>
    <property type="match status" value="1"/>
</dbReference>
<organism>
    <name type="scientific">Bos taurus</name>
    <name type="common">Bovine</name>
    <dbReference type="NCBI Taxonomy" id="9913"/>
    <lineage>
        <taxon>Eukaryota</taxon>
        <taxon>Metazoa</taxon>
        <taxon>Chordata</taxon>
        <taxon>Craniata</taxon>
        <taxon>Vertebrata</taxon>
        <taxon>Euteleostomi</taxon>
        <taxon>Mammalia</taxon>
        <taxon>Eutheria</taxon>
        <taxon>Laurasiatheria</taxon>
        <taxon>Artiodactyla</taxon>
        <taxon>Ruminantia</taxon>
        <taxon>Pecora</taxon>
        <taxon>Bovidae</taxon>
        <taxon>Bovinae</taxon>
        <taxon>Bos</taxon>
    </lineage>
</organism>
<sequence>MSGKDRIEIFPSRMAQTIMKARLKGAQTGRNLLKKKSDALTLRFRQILKKIIETKMLMGEVMREAAFSLAEAKFTAGDFSTTVIQNVNKAQVKIRAKKDNVAGVTLPVFEHYHEGTDSYELTGLARGGEQLAKLKRNYAKAVELLVELASLQTSFVTLDEAIKITNRRVNRIEHVIIPRIERTLAYIITELDEREREEFYRLKKIQEKKKILKEKSDKDLEQRRAAGEVIEPANLLAEEKDEDLLFE</sequence>
<keyword id="KW-0002">3D-structure</keyword>
<keyword id="KW-0966">Cell projection</keyword>
<keyword id="KW-0970">Cilium biogenesis/degradation</keyword>
<keyword id="KW-0963">Cytoplasm</keyword>
<keyword id="KW-0968">Cytoplasmic vesicle</keyword>
<keyword id="KW-0206">Cytoskeleton</keyword>
<keyword id="KW-0903">Direct protein sequencing</keyword>
<keyword id="KW-0375">Hydrogen ion transport</keyword>
<keyword id="KW-0406">Ion transport</keyword>
<keyword id="KW-0472">Membrane</keyword>
<keyword id="KW-1185">Reference proteome</keyword>
<keyword id="KW-0813">Transport</keyword>
<gene>
    <name type="primary">ATP6V1D</name>
    <name type="synonym">ATP6M</name>
    <name type="synonym">VATD</name>
</gene>
<name>VATD_BOVIN</name>
<protein>
    <recommendedName>
        <fullName>V-type proton ATPase subunit D</fullName>
        <shortName>V-ATPase subunit D</shortName>
    </recommendedName>
    <alternativeName>
        <fullName>V-ATPase 28 kDa accessory protein</fullName>
    </alternativeName>
    <alternativeName>
        <fullName>Vacuolar proton pump subunit D</fullName>
    </alternativeName>
</protein>
<feature type="chain" id="PRO_0000144230" description="V-type proton ATPase subunit D">
    <location>
        <begin position="1"/>
        <end position="247"/>
    </location>
</feature>
<feature type="helix" evidence="7">
    <location>
        <begin position="15"/>
        <end position="75"/>
    </location>
</feature>
<feature type="helix" evidence="7">
    <location>
        <begin position="82"/>
        <end position="85"/>
    </location>
</feature>
<feature type="strand" evidence="7">
    <location>
        <begin position="91"/>
        <end position="101"/>
    </location>
</feature>
<feature type="strand" evidence="7">
    <location>
        <begin position="104"/>
        <end position="113"/>
    </location>
</feature>
<feature type="strand" evidence="7">
    <location>
        <begin position="120"/>
        <end position="126"/>
    </location>
</feature>
<feature type="strand" evidence="7">
    <location>
        <begin position="128"/>
        <end position="130"/>
    </location>
</feature>
<feature type="turn" evidence="7">
    <location>
        <begin position="131"/>
        <end position="133"/>
    </location>
</feature>
<feature type="helix" evidence="7">
    <location>
        <begin position="134"/>
        <end position="174"/>
    </location>
</feature>
<feature type="helix" evidence="7">
    <location>
        <begin position="177"/>
        <end position="215"/>
    </location>
</feature>
<comment type="function">
    <text evidence="1 2">Subunit of the V1 complex of vacuolar(H+)-ATPase (V-ATPase), a multisubunit enzyme composed of a peripheral complex (V1) that hydrolyzes ATP and a membrane integral complex (V0) that translocates protons (PubMed:32764564). V-ATPase is responsible for acidifying and maintaining the pH of intracellular compartments and in some cell types, is targeted to the plasma membrane, where it is responsible for acidifying the extracellular environment (PubMed:32764564). May play a role in cilium biogenesis through regulation of the transport and the localization of proteins to the cilium (By similarity).</text>
</comment>
<comment type="subunit">
    <text evidence="1 2">V-ATPase is a heteromultimeric enzyme made up of two complexes: the ATP-hydrolytic V1 complex and the proton translocation V0 complex (PubMed:32764564). The V1 complex consists of three catalytic AB heterodimers that form a heterohexamer, three peripheral stalks each consisting of EG heterodimers, one central rotor including subunits D and F, and the regulatory subunits C and H (PubMed:32764564). The proton translocation complex V0 consists of the proton transport subunit a, a ring of proteolipid subunits c9c'', rotary subunit d, subunits e and f, and the accessory subunits ATP6AP1/Ac45 and ATP6AP2/PRR (PubMed:32764564). Interacts with SNX10 (By similarity).</text>
</comment>
<comment type="subcellular location">
    <subcellularLocation>
        <location evidence="1">Membrane</location>
        <topology evidence="4">Peripheral membrane protein</topology>
        <orientation evidence="4">Cytoplasmic side</orientation>
    </subcellularLocation>
    <subcellularLocation>
        <location evidence="2">Cytoplasmic vesicle</location>
        <location evidence="2">Clathrin-coated vesicle membrane</location>
        <topology evidence="4">Peripheral membrane protein</topology>
    </subcellularLocation>
    <subcellularLocation>
        <location evidence="1">Cytoplasm</location>
        <location evidence="1">Cytoskeleton</location>
        <location evidence="1">Microtubule organizing center</location>
        <location evidence="1">Centrosome</location>
    </subcellularLocation>
    <subcellularLocation>
        <location evidence="1">Cell projection</location>
        <location evidence="1">Cilium</location>
    </subcellularLocation>
    <text evidence="1">Localizes to centrosome and the base of the cilium.</text>
</comment>
<comment type="tissue specificity">
    <text evidence="2 3">Expressed in brain (at protein level) (PubMed:32764564, PubMed:7831318). Present in tissues active in secretion (PubMed:32764564, PubMed:7831318). Amounts elevated in brain, kidney and testis (PubMed:32764564, PubMed:7831318).</text>
</comment>
<comment type="similarity">
    <text evidence="4">Belongs to the V-ATPase D subunit family.</text>
</comment>
<proteinExistence type="evidence at protein level"/>
<evidence type="ECO:0000250" key="1">
    <source>
        <dbReference type="UniProtKB" id="Q9Y5K8"/>
    </source>
</evidence>
<evidence type="ECO:0000269" key="2">
    <source>
    </source>
</evidence>
<evidence type="ECO:0000269" key="3">
    <source>
    </source>
</evidence>
<evidence type="ECO:0000305" key="4"/>
<evidence type="ECO:0007744" key="5">
    <source>
        <dbReference type="PDB" id="6XBW"/>
    </source>
</evidence>
<evidence type="ECO:0007744" key="6">
    <source>
        <dbReference type="PDB" id="6XBY"/>
    </source>
</evidence>
<evidence type="ECO:0007829" key="7">
    <source>
        <dbReference type="PDB" id="6XBW"/>
    </source>
</evidence>